<feature type="chain" id="PRO_0000452993" description="Nonribosomal peptide synthetase opaA">
    <location>
        <begin position="1"/>
        <end position="3901"/>
    </location>
</feature>
<feature type="domain" description="Carrier 1" evidence="3">
    <location>
        <begin position="780"/>
        <end position="854"/>
    </location>
</feature>
<feature type="domain" description="Carrier 2" evidence="3">
    <location>
        <begin position="1858"/>
        <end position="1936"/>
    </location>
</feature>
<feature type="domain" description="Carrier 3" evidence="3">
    <location>
        <begin position="3375"/>
        <end position="3451"/>
    </location>
</feature>
<feature type="region of interest" description="Adenylation 1" evidence="1 2">
    <location>
        <begin position="248"/>
        <end position="641"/>
    </location>
</feature>
<feature type="region of interest" description="Condensation 1" evidence="1 2">
    <location>
        <begin position="891"/>
        <end position="1164"/>
    </location>
</feature>
<feature type="region of interest" description="Adenylation 2" evidence="1 2">
    <location>
        <begin position="1328"/>
        <end position="1725"/>
    </location>
</feature>
<feature type="region of interest" description="Epimerase" evidence="1 2">
    <location>
        <begin position="1953"/>
        <end position="2261"/>
    </location>
</feature>
<feature type="region of interest" description="Condensation 2" evidence="1 2">
    <location>
        <begin position="2403"/>
        <end position="2826"/>
    </location>
</feature>
<feature type="region of interest" description="Adenylation 3" evidence="1 2">
    <location>
        <begin position="2846"/>
        <end position="3243"/>
    </location>
</feature>
<feature type="region of interest" description="Condensation 3" evidence="1 2">
    <location>
        <begin position="3509"/>
        <end position="3837"/>
    </location>
</feature>
<feature type="modified residue" description="O-(pantetheine 4'-phosphoryl)serine" evidence="3">
    <location>
        <position position="815"/>
    </location>
</feature>
<feature type="modified residue" description="O-(pantetheine 4'-phosphoryl)serine" evidence="3">
    <location>
        <position position="1895"/>
    </location>
</feature>
<feature type="modified residue" description="O-(pantetheine 4'-phosphoryl)serine" evidence="3">
    <location>
        <position position="3412"/>
    </location>
</feature>
<dbReference type="EC" id="6.3.2.-" evidence="4"/>
<dbReference type="EMBL" id="JOMC01000153">
    <property type="protein sequence ID" value="KIA75458.1"/>
    <property type="molecule type" value="Genomic_DNA"/>
</dbReference>
<dbReference type="SMR" id="A0A0C1E5J8"/>
<dbReference type="Proteomes" id="UP000053475">
    <property type="component" value="Unassembled WGS sequence"/>
</dbReference>
<dbReference type="GO" id="GO:0005737">
    <property type="term" value="C:cytoplasm"/>
    <property type="evidence" value="ECO:0007669"/>
    <property type="project" value="TreeGrafter"/>
</dbReference>
<dbReference type="GO" id="GO:0016874">
    <property type="term" value="F:ligase activity"/>
    <property type="evidence" value="ECO:0007669"/>
    <property type="project" value="UniProtKB-KW"/>
</dbReference>
<dbReference type="GO" id="GO:0031177">
    <property type="term" value="F:phosphopantetheine binding"/>
    <property type="evidence" value="ECO:0007669"/>
    <property type="project" value="InterPro"/>
</dbReference>
<dbReference type="GO" id="GO:0043041">
    <property type="term" value="P:amino acid activation for nonribosomal peptide biosynthetic process"/>
    <property type="evidence" value="ECO:0007669"/>
    <property type="project" value="TreeGrafter"/>
</dbReference>
<dbReference type="GO" id="GO:0044550">
    <property type="term" value="P:secondary metabolite biosynthetic process"/>
    <property type="evidence" value="ECO:0007669"/>
    <property type="project" value="TreeGrafter"/>
</dbReference>
<dbReference type="CDD" id="cd05918">
    <property type="entry name" value="A_NRPS_SidN3_like"/>
    <property type="match status" value="3"/>
</dbReference>
<dbReference type="CDD" id="cd19542">
    <property type="entry name" value="CT_NRPS-like"/>
    <property type="match status" value="2"/>
</dbReference>
<dbReference type="CDD" id="cd19545">
    <property type="entry name" value="FUM14_C_NRPS-like"/>
    <property type="match status" value="1"/>
</dbReference>
<dbReference type="FunFam" id="3.40.50.980:FF:000001">
    <property type="entry name" value="Non-ribosomal peptide synthetase"/>
    <property type="match status" value="1"/>
</dbReference>
<dbReference type="FunFam" id="3.30.300.30:FF:000015">
    <property type="entry name" value="Nonribosomal peptide synthase SidD"/>
    <property type="match status" value="3"/>
</dbReference>
<dbReference type="FunFam" id="3.30.559.30:FF:000003">
    <property type="entry name" value="Nonribosomal peptide synthase SidD"/>
    <property type="match status" value="1"/>
</dbReference>
<dbReference type="FunFam" id="1.10.1200.10:FF:000005">
    <property type="entry name" value="Nonribosomal peptide synthetase 1"/>
    <property type="match status" value="1"/>
</dbReference>
<dbReference type="FunFam" id="3.40.50.12780:FF:000014">
    <property type="entry name" value="Nonribosomal peptide synthetase 1"/>
    <property type="match status" value="1"/>
</dbReference>
<dbReference type="Gene3D" id="3.30.300.30">
    <property type="match status" value="3"/>
</dbReference>
<dbReference type="Gene3D" id="1.10.1200.10">
    <property type="entry name" value="ACP-like"/>
    <property type="match status" value="3"/>
</dbReference>
<dbReference type="Gene3D" id="3.30.559.10">
    <property type="entry name" value="Chloramphenicol acetyltransferase-like domain"/>
    <property type="match status" value="4"/>
</dbReference>
<dbReference type="Gene3D" id="3.40.50.12780">
    <property type="entry name" value="N-terminal domain of ligase-like"/>
    <property type="match status" value="3"/>
</dbReference>
<dbReference type="Gene3D" id="3.30.559.30">
    <property type="entry name" value="Nonribosomal peptide synthetase, condensation domain"/>
    <property type="match status" value="4"/>
</dbReference>
<dbReference type="InterPro" id="IPR010071">
    <property type="entry name" value="AA_adenyl_dom"/>
</dbReference>
<dbReference type="InterPro" id="IPR036736">
    <property type="entry name" value="ACP-like_sf"/>
</dbReference>
<dbReference type="InterPro" id="IPR045851">
    <property type="entry name" value="AMP-bd_C_sf"/>
</dbReference>
<dbReference type="InterPro" id="IPR020845">
    <property type="entry name" value="AMP-binding_CS"/>
</dbReference>
<dbReference type="InterPro" id="IPR000873">
    <property type="entry name" value="AMP-dep_synth/lig_dom"/>
</dbReference>
<dbReference type="InterPro" id="IPR042099">
    <property type="entry name" value="ANL_N_sf"/>
</dbReference>
<dbReference type="InterPro" id="IPR023213">
    <property type="entry name" value="CAT-like_dom_sf"/>
</dbReference>
<dbReference type="InterPro" id="IPR001242">
    <property type="entry name" value="Condensatn"/>
</dbReference>
<dbReference type="InterPro" id="IPR020806">
    <property type="entry name" value="PKS_PP-bd"/>
</dbReference>
<dbReference type="InterPro" id="IPR009081">
    <property type="entry name" value="PP-bd_ACP"/>
</dbReference>
<dbReference type="InterPro" id="IPR006162">
    <property type="entry name" value="Ppantetheine_attach_site"/>
</dbReference>
<dbReference type="NCBIfam" id="TIGR01733">
    <property type="entry name" value="AA-adenyl-dom"/>
    <property type="match status" value="2"/>
</dbReference>
<dbReference type="NCBIfam" id="NF003417">
    <property type="entry name" value="PRK04813.1"/>
    <property type="match status" value="3"/>
</dbReference>
<dbReference type="PANTHER" id="PTHR45527:SF1">
    <property type="entry name" value="FATTY ACID SYNTHASE"/>
    <property type="match status" value="1"/>
</dbReference>
<dbReference type="PANTHER" id="PTHR45527">
    <property type="entry name" value="NONRIBOSOMAL PEPTIDE SYNTHETASE"/>
    <property type="match status" value="1"/>
</dbReference>
<dbReference type="Pfam" id="PF00501">
    <property type="entry name" value="AMP-binding"/>
    <property type="match status" value="3"/>
</dbReference>
<dbReference type="Pfam" id="PF00668">
    <property type="entry name" value="Condensation"/>
    <property type="match status" value="4"/>
</dbReference>
<dbReference type="Pfam" id="PF00550">
    <property type="entry name" value="PP-binding"/>
    <property type="match status" value="3"/>
</dbReference>
<dbReference type="SMART" id="SM00823">
    <property type="entry name" value="PKS_PP"/>
    <property type="match status" value="3"/>
</dbReference>
<dbReference type="SUPFAM" id="SSF56801">
    <property type="entry name" value="Acetyl-CoA synthetase-like"/>
    <property type="match status" value="3"/>
</dbReference>
<dbReference type="SUPFAM" id="SSF47336">
    <property type="entry name" value="ACP-like"/>
    <property type="match status" value="3"/>
</dbReference>
<dbReference type="SUPFAM" id="SSF52777">
    <property type="entry name" value="CoA-dependent acyltransferases"/>
    <property type="match status" value="9"/>
</dbReference>
<dbReference type="PROSITE" id="PS00455">
    <property type="entry name" value="AMP_BINDING"/>
    <property type="match status" value="3"/>
</dbReference>
<dbReference type="PROSITE" id="PS50075">
    <property type="entry name" value="CARRIER"/>
    <property type="match status" value="3"/>
</dbReference>
<dbReference type="PROSITE" id="PS00012">
    <property type="entry name" value="PHOSPHOPANTETHEINE"/>
    <property type="match status" value="2"/>
</dbReference>
<keyword id="KW-0436">Ligase</keyword>
<keyword id="KW-0596">Phosphopantetheine</keyword>
<keyword id="KW-0597">Phosphoprotein</keyword>
<keyword id="KW-1185">Reference proteome</keyword>
<keyword id="KW-0677">Repeat</keyword>
<sequence>MAIGNDELLASHEEHSRCQFPRLVANPSEEKCLRCNLDVPIRNLLKEACAQYETSLDYVLGAIWAIILHQYIQDDYVGFAVVRRTRTGEAEAEFTDSAERSYSWRTPIHGEMAIGELIKPSTWKRSPYAPGVDLFNTSLVIEEEQQQEQTNTGHHVLKEPFQISLLVKCWPDSPVISLVFSSSYLHPTFGKALASSIEQCARGILSCHDSLVNQMNLFSPIQREIMTRWQGVPSLTSHFNFLYEIVCHNAQHHPSVVALDAWDGRWSYQELDEATSRLAARLVTHGVGPGVFVPVCFDKSCWAVVAMLAINKAGAAFVPIDPSYPAERRQMIILTVAASVILTSQQHLNLFPPSPEVMTICLSPSILSDSPASGYPRRMRFEGPAYVLFTSGSTGEPKGCEISHQAFASLVNHTEDLHLTPESRTLQFASYSFGMSVIEIFCTLVAGGTVCIPSAEQRLNDLATAIKTMEINWAILTPTVIASLYPEDLPHLRFVLVAGEISDQSAVDQWAAAGVDIRHAYGLTEWTGIFAVSHKISGQGTGQTTIGKPVDAHAWLVNTQNPAQLVPLGAPGELVIKGPGLARGYLHDPLRTKASFLSDLPWLAEWKLAHGQVYRTGDIMRYHVDGSLVYLHRKDNQIKIRGLRVELGEIESHLTRILKGAKRVAVIACKPKGSHDLHVLIALILLPHVADGQLLAIGRRSKGLPFVQLPGKTREELRDARESLRRWLPDYMIPQFLLPLVDMPTTVSGKIDRRRIRTLLNELSVKELMNHAGVQVEHRLPVTANEIVVHEVTCKSLGLDLVSMQDSFFDLAGDSVAAMKMSGLARQHGLQLTVKDIFEAPILQDMATRLTRIKELTVTAIPFALLPNVVPSQIVAEIAEQAKVDPLEITDAYPCSALQEGLCALSMRDAQSYKVRLICHIRPGTDLQVFRAAWERTYLINDVLRTRFVTSSTHGAIQAVIQRPFRWDEAESFEQYVTLIEQEPMGLGKQLVRACLLRDPRSQHQQTAFVLTLHHGICDRWSIRQLLEQIDRQVHAFPKQLELDPIEFRPFISYITETASKSAEYWENQFQDIKAVIFPELPAPDYTPVADQLTQYDIKLPTRLVREISIANYIRLAWALVLAHNTSSDDVVFGAIVSGRASPVKGIVTLTGPTIATVPIRINLSREMTVLQALTSVERQFIEMLPWEQAGLQNIRRLSPEADRACSFQSLFTVQPFLGNPPPLFSACEEGAAIAGGFASYALNIECYISEDERRMQAKVAFDPRVIALGRVRRLLEHLQVVLNEVAAQTERRLSSISPLSPSDMSLLWEWNKSVPPKPKELLHEIIQSHAQKTPKSPAVSAFDGELTFEELEWHATQLAGELLQQVPHPGMLLPMLFEKSVWVTVAMLAVLKIGSAIVLLDGSYSIERMRTICADVEAPLVVCSSQMTSTVEQIGLRPVIVAHTRAFFSKSASPVSLPPVRVHSDSPCYMIFTSGSTGMPKGLLVNHGAFAASMLGWMPKLQVDKSSRVLQFSSFAFDACFAETFTALFAGACICVPSDDQRMNDLHAAMRQHRISHAILTPSSARVVRAEQVPSLRVLALVGEPILPSDMAYWAPRVRLLNGYGPAECAPASVVQYIDGSPALDVRDIGHPVGCVAWVCDPRDSEILKPVGVAGELLIEGPNVGLGYFKDAAKTDSAFVQPRWLQSLRGMTGVRAYRSSDLVCYTEDGRLRYLGRIGNQVKLRGQRLDPTHIEHQLARCFPGATEVAVVVGCPRNASDRPTLAAFVVVDKKANGNGSTDFHDVPTKDVANRAATARARMQQVLPGYMVPTLMIPVSSLPCSAAGKLDRRALENEIASRTWKELSQYESANESSTNRTPLDTERDLQGIWAKVLDLPMEAVGLRQSFFALGGDSITAMLVVAEARGRRVGLNITVDDIFRFRTIEQIAAQAATRAATIQQLCSHDVLDVPFKLTPIQQLFFRTQGQKVRHRFNHNVLLHLTQRIPYHRLESAMKTIVTAHPMLRARFVPGTAGLDWKQNIPSNIEGTFRCKHQTNGTMARILADGQRSLNITAGPVFSADLIDTEERQTILLVAHHLVVDLVSWTVILNDLDELLCGDPISGHTSTSFQTWSRLLDEYVRGQARAARLPDAQPWDGIEGFWGISQEQMTFGSCEDTTVQIERETTDLLLGDVNKTFGTQPVEVLHAALLFAFIQAFPKRPPPATYSEAHGREPWDATTDLTRTVGWFTTLAPVLLQLDSASELSEAVGQVKDARRRLTRNGLDAFTNRQQAGVMEIVFNYGGRYSQQLQKAGALFEVQSFQTLNIFDTGLDVRRWSVVDINSFVQDGKLTFVFTHPCGPSQTRIISEWTLHLMKTLKTLATDFSSASRIYTPMDFPLLKTDKAQLERLLSSLSWISPASDIENLYPCAPIQRGILLSQEKERSHYHVTMLWEIQIAGGVSASVPKAKDAIHQVITCHPCLRTSFVRSFSERALYDQVVTHNASPQIEVVHNPSKGWQGRPSAKGSPLTPEFPNRFTIHVDQEQRVYIRLDVTHALVDAMSFSLIQRDLCLAYEGRLNISSGPPYANFIAYLQSRNEEEDRVFWEEELEGIQPCLFPSLTDYQVGEVDDALSWSVELQHSEEIYAYCRAHSVTPANIFCLAWSLVLRSYVGSDDVCFGVLASGRELPFEGAQDVVGPLINVLTFRNRLKENLSVGECLQQVHTKYLRYLQHQTYPLADISHQKGDAVLFNTALSIQRVMVSADTPTSTSLNLVHRRDPVEYAIAINVDMEPSRIAVHLRYWLSSLSSEMAMLIASSFEQAVHQIITNDQLHPAQLDLVSTDHKRLLHRWNSTLPAFDEAPIHETIQQHVRETPDALAVRWSKGSFTYRELGLLSDRLGGHLRRQGVAPGAFVPLCFDKSPWTVVALLAVIKSGAAFALCDVTHPDSRLRSICQDLQSTVILCSPDQETRCKKIAEKAIVVGEHNNSWKGDTVGPPTPELSVRAPLFVVYTSGSTGKPKGVLIEHRSFCALVHYQISVWGMSPAARVMQFASYAFDASVFEILFPLMRGTCTCILTEVERRDYLDATMKRLRVTHAFLTPSVARQLSPAAVPDLQVLVCGGEPLSHQDINQWTVNVRLVEAYGPAECTVFSACQPSLTPASCPSDIGRPVGCVVWLVDPDDTERLMPVGSLGEILIEGPIVGRGYINNSQATESSFIKPPAWLRAIRPDLDPTTRLYKTGDLARYFPDGRLDIHGRKDSQIKIRGQRIELGEVEFQVQSRFKLAVGVVVDVAPTGPNGSTALCAFICFGGRVSPSEVDSQVLRAADEDFAAEAASASAALFECLPAYMVPSYFFPLANLPVNASGKADRRYLKSLVDIPAEQLNQYRPLSNRQQRLPSTAGEQLLHNIWSTALGLDGKLIGADDSFFQVGGDSVSAMKVAAAARQQGLEISVADIFAHPRLSALAARSRSKDASDSGFDPTPFSLCPPGAKVLLPMLLRARNMLPPKSTIIDILPVSEGQGFFLTRVALHHFSFAVEGKLDIERIRHACETVYLFFAILRTIFIHWHGQILQLVLDNIEVPFHHILTDSDPAEVHRELRDLDRKVASVLDEQPPCAFILISDRSGTRHELIFRLSHTQWDGLSLAELFSAFGSAYHNRPIPPTTPLTTVVYHRLMRNKTKSLSFWRDYLRGSTISSLIPSAPETTDLSPGTTIWENTNLQPAPEPPSGITMASVVKAAWALVIAQEKGRGCRDIVFGQTVNGRSSALPNIERIFGCCLNFIPVRIRVREEMSIYDLLRHTQAQYQETVAHDDVGFQSIVDESTDWPRGTYFNSIVQHQNIPLHHVMPLEDLKTHFTLNGYFRPGREVIIFTEPDGDVLSVQFCANPNVIEFSYAQKLHRTLVDLIVHLCRCPDDLVSTLLVE</sequence>
<protein>
    <recommendedName>
        <fullName evidence="5">Nonribosomal peptide synthetase opaA</fullName>
        <ecNumber evidence="4">6.3.2.-</ecNumber>
    </recommendedName>
    <alternativeName>
        <fullName evidence="5">Oxepinamide F biosynthesis cluster protein A</fullName>
    </alternativeName>
    <alternativeName>
        <fullName evidence="5">Quinazolinone synthase opaA</fullName>
    </alternativeName>
</protein>
<comment type="function">
    <text evidence="4">Nonribosomal peptide synthetase; part of the gene cluster that mediates the biosynthesis of oxepinamides, derivatives of anthranilyl-containing tripeptides that share an oxepin ring and a fused pyrimidinone moiety (PubMed:33004788). The nonribosomal peptide synthetase (NRPS) opaA assembles the quinazolinone core with D-Phe incorporation (PubMed:33004788). The first adenylation domain (A1) of opaA loads and activates anthranilic acid whereas the second A domain (A2) is for activating of L-Phe, which is then converted to D-form by the E domain (PubMed:33004788). The third A domain (A3) is responsible for L-Ile activation and the terminal condensation domain C3 for cyclization and releasing the NRPS product protuboxepin K (PubMed:33004788). The cytochrome P450 monooxygenase opaB then catalyzes alone the oxepin ring formation to convert protuboxepin K into protuboxepin A (PubMed:33004788). The flavoenzyme opaC installs subsequently one hydroxyl group at the oxepin ring, accompanied by double bond migration, to form 15-epi-oxepinamide E (PubMed:33004788). The epimerase opaE changes the D-Phe residue back to L-form, leading to oxepinamide E, which is further methylated at the hydroxyl group at C-12 by the O-methyltransferase OpaF to yield oxepinamide F (PubMed:33004788).</text>
</comment>
<comment type="domain">
    <text evidence="4">NRP synthetases are composed of discrete domains (adenylation (A), thiolation (T) or peptidyl carrier protein (PCP) and condensation (C) domains) which when grouped together are referred to as a single module. Each module is responsible for the recognition (via the A domain) and incorporation of a single amino acid into the growing peptide product. Thus, an NRP synthetase is generally composed of one or more modules and can terminate in a thioesterase domain (TE) that releases the newly synthesized peptide from the enzyme. Occasionally, epimerase (E) domains (responsible for L- to D- amino acid conversion) are present within the NRP synthetase. OpaA has the following architecture: A1-T1-C1-A2-T2-E-C2-A3-T3-C3.</text>
</comment>
<comment type="disruption phenotype">
    <text evidence="4">Abolishes the production of both oxepinamide F and oxepinamide E.</text>
</comment>
<comment type="similarity">
    <text evidence="6">Belongs to the NRP synthetase family.</text>
</comment>
<proteinExistence type="evidence at protein level"/>
<reference key="1">
    <citation type="journal article" date="2015" name="PLoS ONE">
        <title>A genomics based discovery of secondary metabolite biosynthetic gene clusters in Aspergillus ustus.</title>
        <authorList>
            <person name="Pi B."/>
            <person name="Yu D."/>
            <person name="Dai F."/>
            <person name="Song X."/>
            <person name="Zhu C."/>
            <person name="Li H."/>
            <person name="Yu Y."/>
        </authorList>
    </citation>
    <scope>NUCLEOTIDE SEQUENCE [LARGE SCALE GENOMIC DNA]</scope>
    <scope>IDENTIFICATION</scope>
    <source>
        <strain>3.3904</strain>
    </source>
</reference>
<reference key="2">
    <citation type="journal article" date="2020" name="Nat. Commun.">
        <title>Oxepinamide F biosynthesis involves enzymatic D-aminoacyl epimerization, 3H-oxepin formation, and hydroxylation induced double bond migration.</title>
        <authorList>
            <person name="Zheng L."/>
            <person name="Wang H."/>
            <person name="Fan A."/>
            <person name="Li S.M."/>
        </authorList>
    </citation>
    <scope>FUNCTION</scope>
    <scope>DISRUPTION PHENOTYPE</scope>
    <scope>CATALYTIC ACTIVITY</scope>
    <scope>DOMAIN</scope>
    <scope>PATHWAY</scope>
</reference>
<gene>
    <name evidence="5" type="primary">opaA</name>
    <name type="ORF">HK57_00065</name>
</gene>
<accession>A0A0C1E5J8</accession>
<name>OPAA_ASPUT</name>
<organism>
    <name type="scientific">Aspergillus ustus</name>
    <dbReference type="NCBI Taxonomy" id="40382"/>
    <lineage>
        <taxon>Eukaryota</taxon>
        <taxon>Fungi</taxon>
        <taxon>Dikarya</taxon>
        <taxon>Ascomycota</taxon>
        <taxon>Pezizomycotina</taxon>
        <taxon>Eurotiomycetes</taxon>
        <taxon>Eurotiomycetidae</taxon>
        <taxon>Eurotiales</taxon>
        <taxon>Aspergillaceae</taxon>
        <taxon>Aspergillus</taxon>
        <taxon>Aspergillus subgen. Nidulantes</taxon>
    </lineage>
</organism>
<evidence type="ECO:0000250" key="1">
    <source>
        <dbReference type="UniProtKB" id="Q4WLW5"/>
    </source>
</evidence>
<evidence type="ECO:0000255" key="2"/>
<evidence type="ECO:0000255" key="3">
    <source>
        <dbReference type="PROSITE-ProRule" id="PRU00258"/>
    </source>
</evidence>
<evidence type="ECO:0000269" key="4">
    <source>
    </source>
</evidence>
<evidence type="ECO:0000303" key="5">
    <source>
    </source>
</evidence>
<evidence type="ECO:0000305" key="6"/>